<reference key="1">
    <citation type="journal article" date="1996" name="J. Bacteriol.">
        <title>Molecular and phylogenetic characterization of pyruvate and 2-ketoisovalerate ferredoxin oxidoreductases from Pyrococcus furiosus and pyruvate ferredoxin oxidoreductase from Thermotoga maritima.</title>
        <authorList>
            <person name="Kletzin A."/>
            <person name="Adams M.W.W."/>
        </authorList>
    </citation>
    <scope>NUCLEOTIDE SEQUENCE [GENOMIC DNA]</scope>
    <scope>PROTEIN SEQUENCE OF 5-15</scope>
    <source>
        <strain>ATCC 43587 / DSM 3638 / JCM 8422 / Vc1</strain>
    </source>
</reference>
<reference key="2">
    <citation type="journal article" date="1999" name="Genetics">
        <title>Divergence of the hyperthermophilic archaea Pyrococcus furiosus and P. horikoshii inferred from complete genomic sequences.</title>
        <authorList>
            <person name="Maeder D.L."/>
            <person name="Weiss R.B."/>
            <person name="Dunn D.M."/>
            <person name="Cherry J.L."/>
            <person name="Gonzalez J.M."/>
            <person name="DiRuggiero J."/>
            <person name="Robb F.T."/>
        </authorList>
    </citation>
    <scope>NUCLEOTIDE SEQUENCE [LARGE SCALE GENOMIC DNA]</scope>
    <source>
        <strain>ATCC 43587 / DSM 3638 / JCM 8422 / Vc1</strain>
    </source>
</reference>
<reference key="3">
    <citation type="journal article" date="1994" name="Biochemistry">
        <title>Characterization of an ancestral type of pyruvate ferredoxin oxidoreductase from the hyperthermophilic bacterium, Thermotoga maritima.</title>
        <authorList>
            <person name="Blamey J.M."/>
            <person name="Adams M.W.W."/>
        </authorList>
    </citation>
    <scope>PROTEIN SEQUENCE OF 2-32</scope>
</reference>
<reference key="4">
    <citation type="journal article" date="1993" name="Biochim. Biophys. Acta">
        <title>Purification and characterization of pyruvate ferredoxin oxidoreductase from the hyperthermophilic archaeon Pyrococcus furiosus.</title>
        <authorList>
            <person name="Blamey J.M."/>
            <person name="Adams M.W.W."/>
        </authorList>
    </citation>
    <scope>CHARACTERIZATION</scope>
    <source>
        <strain>ATCC 43587 / DSM 3638 / JCM 8422 / Vc1</strain>
    </source>
</reference>
<evidence type="ECO:0000305" key="1"/>
<proteinExistence type="evidence at protein level"/>
<feature type="chain" id="PRO_0000099900" description="Pyruvate synthase subunit PorA">
    <location>
        <begin position="1"/>
        <end position="396"/>
    </location>
</feature>
<feature type="sequence conflict" description="In Ref. 1; CAA59505." evidence="1" ref="1">
    <original>K</original>
    <variation>N</variation>
    <location>
        <position position="277"/>
    </location>
</feature>
<feature type="sequence conflict" description="In Ref. 1; CAA59505." evidence="1" ref="1">
    <original>L</original>
    <variation>H</variation>
    <location>
        <position position="355"/>
    </location>
</feature>
<keyword id="KW-0903">Direct protein sequencing</keyword>
<keyword id="KW-0560">Oxidoreductase</keyword>
<keyword id="KW-1185">Reference proteome</keyword>
<organism>
    <name type="scientific">Pyrococcus furiosus (strain ATCC 43587 / DSM 3638 / JCM 8422 / Vc1)</name>
    <dbReference type="NCBI Taxonomy" id="186497"/>
    <lineage>
        <taxon>Archaea</taxon>
        <taxon>Methanobacteriati</taxon>
        <taxon>Methanobacteriota</taxon>
        <taxon>Thermococci</taxon>
        <taxon>Thermococcales</taxon>
        <taxon>Thermococcaceae</taxon>
        <taxon>Pyrococcus</taxon>
    </lineage>
</organism>
<accession>Q51804</accession>
<protein>
    <recommendedName>
        <fullName>Pyruvate synthase subunit PorA</fullName>
        <ecNumber>1.2.7.1</ecNumber>
    </recommendedName>
    <alternativeName>
        <fullName>Pyruvate oxidoreductase alpha chain</fullName>
        <shortName>POR</shortName>
    </alternativeName>
    <alternativeName>
        <fullName>Pyruvic-ferredoxin oxidoreductase subunit alpha</fullName>
    </alternativeName>
</protein>
<gene>
    <name type="primary">porA</name>
    <name type="ordered locus">PF0966</name>
</gene>
<comment type="catalytic activity">
    <reaction>
        <text>2 oxidized [2Fe-2S]-[ferredoxin] + pyruvate + CoA = 2 reduced [2Fe-2S]-[ferredoxin] + acetyl-CoA + CO2 + H(+)</text>
        <dbReference type="Rhea" id="RHEA:12765"/>
        <dbReference type="Rhea" id="RHEA-COMP:10000"/>
        <dbReference type="Rhea" id="RHEA-COMP:10001"/>
        <dbReference type="ChEBI" id="CHEBI:15361"/>
        <dbReference type="ChEBI" id="CHEBI:15378"/>
        <dbReference type="ChEBI" id="CHEBI:16526"/>
        <dbReference type="ChEBI" id="CHEBI:33737"/>
        <dbReference type="ChEBI" id="CHEBI:33738"/>
        <dbReference type="ChEBI" id="CHEBI:57287"/>
        <dbReference type="ChEBI" id="CHEBI:57288"/>
        <dbReference type="EC" id="1.2.7.1"/>
    </reaction>
</comment>
<comment type="subunit">
    <text>Heterotetramer of one alpha, one beta, one delta and one gamma chain.</text>
</comment>
<name>PORA_PYRFU</name>
<sequence length="396" mass="44177">MPIRKVMKANEAAAWAAKLAKPKVIAAFPITPSTLIPEKISEFVANGELDAEFIKVESEHSAISACVGAAAAGVRTFTATASQGLALMHEILFIAAGMRLPIVMAIGNRALSAPINIWNDWQDTISQRDTGWMQFYAENNQEALDLILIAYKVAEDERVLLPAMVGFDAFILTHTVEPVEIPDQEVVDEFLGEYEPKHAYIDPARPITQGSLAFPAHYMESRYTVWEAMERAKKVIDEAFAEFEKKFGRKYQKIEEYKTEDADIIFVTMGSLAGTLKEWIDKKREEGYKVGAAKITVYRPFPVEEIRELAKKAKVLAFLEKNITIGLYGAVFTDASAALINESEKPLMVDFIVGLGGRDVTFNQLDEALEIAEKALKEGKVENPINWIGLRWELVK</sequence>
<dbReference type="EC" id="1.2.7.1"/>
<dbReference type="EMBL" id="X85250">
    <property type="protein sequence ID" value="CAA59505.1"/>
    <property type="molecule type" value="Genomic_DNA"/>
</dbReference>
<dbReference type="EMBL" id="AE009950">
    <property type="protein sequence ID" value="AAL81090.1"/>
    <property type="molecule type" value="Genomic_DNA"/>
</dbReference>
<dbReference type="PIR" id="T45088">
    <property type="entry name" value="T45088"/>
</dbReference>
<dbReference type="RefSeq" id="WP_011012103.1">
    <property type="nucleotide sequence ID" value="NZ_CP023154.1"/>
</dbReference>
<dbReference type="SMR" id="Q51804"/>
<dbReference type="IntAct" id="Q51804">
    <property type="interactions" value="1"/>
</dbReference>
<dbReference type="STRING" id="186497.PF0966"/>
<dbReference type="PaxDb" id="186497-PF0966"/>
<dbReference type="GeneID" id="41712778"/>
<dbReference type="KEGG" id="pfu:PF0966"/>
<dbReference type="PATRIC" id="fig|186497.12.peg.1025"/>
<dbReference type="eggNOG" id="arCOG01608">
    <property type="taxonomic scope" value="Archaea"/>
</dbReference>
<dbReference type="HOGENOM" id="CLU_002569_5_0_2"/>
<dbReference type="OrthoDB" id="372068at2157"/>
<dbReference type="PhylomeDB" id="Q51804"/>
<dbReference type="BRENDA" id="1.2.7.1">
    <property type="organism ID" value="5243"/>
</dbReference>
<dbReference type="Proteomes" id="UP000001013">
    <property type="component" value="Chromosome"/>
</dbReference>
<dbReference type="GO" id="GO:0019164">
    <property type="term" value="F:pyruvate synthase activity"/>
    <property type="evidence" value="ECO:0007669"/>
    <property type="project" value="UniProtKB-EC"/>
</dbReference>
<dbReference type="GO" id="GO:0006979">
    <property type="term" value="P:response to oxidative stress"/>
    <property type="evidence" value="ECO:0007669"/>
    <property type="project" value="TreeGrafter"/>
</dbReference>
<dbReference type="CDD" id="cd07034">
    <property type="entry name" value="TPP_PYR_PFOR_IOR-alpha_like"/>
    <property type="match status" value="1"/>
</dbReference>
<dbReference type="FunFam" id="3.40.50.920:FF:000010">
    <property type="entry name" value="Pyruvate ferredoxin oxidoreductase, alpha subunit"/>
    <property type="match status" value="1"/>
</dbReference>
<dbReference type="FunFam" id="3.40.50.970:FF:000012">
    <property type="entry name" value="Pyruvate:ferredoxin (Flavodoxin) oxidoreductase"/>
    <property type="match status" value="1"/>
</dbReference>
<dbReference type="Gene3D" id="3.40.50.920">
    <property type="match status" value="1"/>
</dbReference>
<dbReference type="Gene3D" id="3.40.50.970">
    <property type="match status" value="1"/>
</dbReference>
<dbReference type="InterPro" id="IPR033412">
    <property type="entry name" value="PFOR_II"/>
</dbReference>
<dbReference type="InterPro" id="IPR050722">
    <property type="entry name" value="Pyruvate:ferred/Flavod_OxRd"/>
</dbReference>
<dbReference type="InterPro" id="IPR053390">
    <property type="entry name" value="Pyruvate_synthase_PorA"/>
</dbReference>
<dbReference type="InterPro" id="IPR002880">
    <property type="entry name" value="Pyrv_Fd/Flavodoxin_OxRdtase_N"/>
</dbReference>
<dbReference type="InterPro" id="IPR029061">
    <property type="entry name" value="THDP-binding"/>
</dbReference>
<dbReference type="InterPro" id="IPR009014">
    <property type="entry name" value="Transketo_C/PFOR_II"/>
</dbReference>
<dbReference type="NCBIfam" id="NF040682">
    <property type="entry name" value="PorA_Arch"/>
    <property type="match status" value="1"/>
</dbReference>
<dbReference type="NCBIfam" id="NF006233">
    <property type="entry name" value="PRK08367.1"/>
    <property type="match status" value="1"/>
</dbReference>
<dbReference type="PANTHER" id="PTHR32154">
    <property type="entry name" value="PYRUVATE-FLAVODOXIN OXIDOREDUCTASE-RELATED"/>
    <property type="match status" value="1"/>
</dbReference>
<dbReference type="PANTHER" id="PTHR32154:SF0">
    <property type="entry name" value="PYRUVATE-FLAVODOXIN OXIDOREDUCTASE-RELATED"/>
    <property type="match status" value="1"/>
</dbReference>
<dbReference type="Pfam" id="PF17147">
    <property type="entry name" value="PFOR_II"/>
    <property type="match status" value="1"/>
</dbReference>
<dbReference type="Pfam" id="PF01855">
    <property type="entry name" value="POR_N"/>
    <property type="match status" value="1"/>
</dbReference>
<dbReference type="SUPFAM" id="SSF52518">
    <property type="entry name" value="Thiamin diphosphate-binding fold (THDP-binding)"/>
    <property type="match status" value="1"/>
</dbReference>
<dbReference type="SUPFAM" id="SSF52922">
    <property type="entry name" value="TK C-terminal domain-like"/>
    <property type="match status" value="1"/>
</dbReference>